<name>RL14B_YEAST</name>
<gene>
    <name evidence="6" type="primary">RPL14B</name>
    <name type="ordered locus">YHL001W</name>
</gene>
<evidence type="ECO:0000250" key="1">
    <source>
        <dbReference type="UniProtKB" id="P36105"/>
    </source>
</evidence>
<evidence type="ECO:0000269" key="2">
    <source>
    </source>
</evidence>
<evidence type="ECO:0000269" key="3">
    <source>
    </source>
</evidence>
<evidence type="ECO:0000269" key="4">
    <source>
    </source>
</evidence>
<evidence type="ECO:0000303" key="5">
    <source>
    </source>
</evidence>
<evidence type="ECO:0000303" key="6">
    <source>
    </source>
</evidence>
<evidence type="ECO:0000305" key="7"/>
<evidence type="ECO:0000305" key="8">
    <source>
    </source>
</evidence>
<evidence type="ECO:0000305" key="9">
    <source>
    </source>
</evidence>
<protein>
    <recommendedName>
        <fullName evidence="5">Large ribosomal subunit protein eL14B</fullName>
    </recommendedName>
    <alternativeName>
        <fullName evidence="6">60S ribosomal protein L14-B</fullName>
    </alternativeName>
</protein>
<reference key="1">
    <citation type="journal article" date="1994" name="Science">
        <title>Complete nucleotide sequence of Saccharomyces cerevisiae chromosome VIII.</title>
        <authorList>
            <person name="Johnston M."/>
            <person name="Andrews S."/>
            <person name="Brinkman R."/>
            <person name="Cooper J."/>
            <person name="Ding H."/>
            <person name="Dover J."/>
            <person name="Du Z."/>
            <person name="Favello A."/>
            <person name="Fulton L."/>
            <person name="Gattung S."/>
            <person name="Geisel C."/>
            <person name="Kirsten J."/>
            <person name="Kucaba T."/>
            <person name="Hillier L.W."/>
            <person name="Jier M."/>
            <person name="Johnston L."/>
            <person name="Langston Y."/>
            <person name="Latreille P."/>
            <person name="Louis E.J."/>
            <person name="Macri C."/>
            <person name="Mardis E."/>
            <person name="Menezes S."/>
            <person name="Mouser L."/>
            <person name="Nhan M."/>
            <person name="Rifkin L."/>
            <person name="Riles L."/>
            <person name="St Peter H."/>
            <person name="Trevaskis E."/>
            <person name="Vaughan K."/>
            <person name="Vignati D."/>
            <person name="Wilcox L."/>
            <person name="Wohldman P."/>
            <person name="Waterston R."/>
            <person name="Wilson R."/>
            <person name="Vaudin M."/>
        </authorList>
    </citation>
    <scope>NUCLEOTIDE SEQUENCE [LARGE SCALE GENOMIC DNA]</scope>
    <source>
        <strain>ATCC 204508 / S288c</strain>
    </source>
</reference>
<reference key="2">
    <citation type="journal article" date="2014" name="G3 (Bethesda)">
        <title>The reference genome sequence of Saccharomyces cerevisiae: Then and now.</title>
        <authorList>
            <person name="Engel S.R."/>
            <person name="Dietrich F.S."/>
            <person name="Fisk D.G."/>
            <person name="Binkley G."/>
            <person name="Balakrishnan R."/>
            <person name="Costanzo M.C."/>
            <person name="Dwight S.S."/>
            <person name="Hitz B.C."/>
            <person name="Karra K."/>
            <person name="Nash R.S."/>
            <person name="Weng S."/>
            <person name="Wong E.D."/>
            <person name="Lloyd P."/>
            <person name="Skrzypek M.S."/>
            <person name="Miyasato S.R."/>
            <person name="Simison M."/>
            <person name="Cherry J.M."/>
        </authorList>
    </citation>
    <scope>GENOME REANNOTATION</scope>
    <source>
        <strain>ATCC 204508 / S288c</strain>
    </source>
</reference>
<reference key="3">
    <citation type="journal article" date="1998" name="Yeast">
        <title>The list of cytoplasmic ribosomal proteins of Saccharomyces cerevisiae.</title>
        <authorList>
            <person name="Planta R.J."/>
            <person name="Mager W.H."/>
        </authorList>
    </citation>
    <scope>NOMENCLATURE</scope>
    <scope>SUBUNIT</scope>
</reference>
<reference key="4">
    <citation type="journal article" date="2003" name="Nature">
        <title>Global analysis of protein localization in budding yeast.</title>
        <authorList>
            <person name="Huh W.-K."/>
            <person name="Falvo J.V."/>
            <person name="Gerke L.C."/>
            <person name="Carroll A.S."/>
            <person name="Howson R.W."/>
            <person name="Weissman J.S."/>
            <person name="O'Shea E.K."/>
        </authorList>
    </citation>
    <scope>SUBCELLULAR LOCATION [LARGE SCALE ANALYSIS]</scope>
</reference>
<reference key="5">
    <citation type="journal article" date="2003" name="Nature">
        <title>Global analysis of protein expression in yeast.</title>
        <authorList>
            <person name="Ghaemmaghami S."/>
            <person name="Huh W.-K."/>
            <person name="Bower K."/>
            <person name="Howson R.W."/>
            <person name="Belle A."/>
            <person name="Dephoure N."/>
            <person name="O'Shea E.K."/>
            <person name="Weissman J.S."/>
        </authorList>
    </citation>
    <scope>LEVEL OF PROTEIN EXPRESSION [LARGE SCALE ANALYSIS]</scope>
</reference>
<reference key="6">
    <citation type="journal article" date="2011" name="Science">
        <title>The structure of the eukaryotic ribosome at 3.0 A resolution.</title>
        <authorList>
            <person name="Ben-Shem A."/>
            <person name="Garreau de Loubresse N."/>
            <person name="Melnikov S."/>
            <person name="Jenner L."/>
            <person name="Yusupova G."/>
            <person name="Yusupov M."/>
        </authorList>
    </citation>
    <scope>SUBUNIT</scope>
    <scope>SUBCELLULAR LOCATION</scope>
</reference>
<reference key="7">
    <citation type="journal article" date="2014" name="Curr. Opin. Struct. Biol.">
        <title>A new system for naming ribosomal proteins.</title>
        <authorList>
            <person name="Ban N."/>
            <person name="Beckmann R."/>
            <person name="Cate J.H.D."/>
            <person name="Dinman J.D."/>
            <person name="Dragon F."/>
            <person name="Ellis S.R."/>
            <person name="Lafontaine D.L.J."/>
            <person name="Lindahl L."/>
            <person name="Liljas A."/>
            <person name="Lipton J.M."/>
            <person name="McAlear M.A."/>
            <person name="Moore P.B."/>
            <person name="Noller H.F."/>
            <person name="Ortega J."/>
            <person name="Panse V.G."/>
            <person name="Ramakrishnan V."/>
            <person name="Spahn C.M.T."/>
            <person name="Steitz T.A."/>
            <person name="Tchorzewski M."/>
            <person name="Tollervey D."/>
            <person name="Warren A.J."/>
            <person name="Williamson J.R."/>
            <person name="Wilson D."/>
            <person name="Yonath A."/>
            <person name="Yusupov M."/>
        </authorList>
    </citation>
    <scope>NOMENCLATURE</scope>
</reference>
<keyword id="KW-0002">3D-structure</keyword>
<keyword id="KW-0007">Acetylation</keyword>
<keyword id="KW-0963">Cytoplasm</keyword>
<keyword id="KW-1185">Reference proteome</keyword>
<keyword id="KW-0687">Ribonucleoprotein</keyword>
<keyword id="KW-0689">Ribosomal protein</keyword>
<organism>
    <name type="scientific">Saccharomyces cerevisiae (strain ATCC 204508 / S288c)</name>
    <name type="common">Baker's yeast</name>
    <dbReference type="NCBI Taxonomy" id="559292"/>
    <lineage>
        <taxon>Eukaryota</taxon>
        <taxon>Fungi</taxon>
        <taxon>Dikarya</taxon>
        <taxon>Ascomycota</taxon>
        <taxon>Saccharomycotina</taxon>
        <taxon>Saccharomycetes</taxon>
        <taxon>Saccharomycetales</taxon>
        <taxon>Saccharomycetaceae</taxon>
        <taxon>Saccharomyces</taxon>
    </lineage>
</organism>
<dbReference type="EMBL" id="U10555">
    <property type="protein sequence ID" value="AAB68426.1"/>
    <property type="molecule type" value="Genomic_DNA"/>
</dbReference>
<dbReference type="EMBL" id="BK006934">
    <property type="protein sequence ID" value="DAA06686.1"/>
    <property type="molecule type" value="Genomic_DNA"/>
</dbReference>
<dbReference type="PIR" id="S46797">
    <property type="entry name" value="S46797"/>
</dbReference>
<dbReference type="RefSeq" id="NP_011862.1">
    <property type="nucleotide sequence ID" value="NM_001179081.1"/>
</dbReference>
<dbReference type="PDB" id="4V8Y">
    <property type="method" value="EM"/>
    <property type="resolution" value="4.30 A"/>
    <property type="chains" value="BM=2-138"/>
</dbReference>
<dbReference type="PDB" id="4V8Z">
    <property type="method" value="EM"/>
    <property type="resolution" value="6.60 A"/>
    <property type="chains" value="BM=2-138"/>
</dbReference>
<dbReference type="PDB" id="4V91">
    <property type="method" value="EM"/>
    <property type="resolution" value="3.70 A"/>
    <property type="chains" value="M=1-138"/>
</dbReference>
<dbReference type="PDBsum" id="4V8Y"/>
<dbReference type="PDBsum" id="4V8Z"/>
<dbReference type="PDBsum" id="4V91"/>
<dbReference type="SMR" id="P38754"/>
<dbReference type="BioGRID" id="36424">
    <property type="interactions" value="157"/>
</dbReference>
<dbReference type="ComplexPortal" id="CPX-1601">
    <property type="entry name" value="60S cytosolic large ribosomal subunit"/>
</dbReference>
<dbReference type="DIP" id="DIP-5568N"/>
<dbReference type="FunCoup" id="P38754">
    <property type="interactions" value="1241"/>
</dbReference>
<dbReference type="IntAct" id="P38754">
    <property type="interactions" value="73"/>
</dbReference>
<dbReference type="MINT" id="P38754"/>
<dbReference type="STRING" id="4932.YHL001W"/>
<dbReference type="iPTMnet" id="P38754"/>
<dbReference type="PaxDb" id="4932-YHL001W"/>
<dbReference type="PeptideAtlas" id="P38754"/>
<dbReference type="EnsemblFungi" id="YHL001W_mRNA">
    <property type="protein sequence ID" value="YHL001W"/>
    <property type="gene ID" value="YHL001W"/>
</dbReference>
<dbReference type="GeneID" id="856388"/>
<dbReference type="KEGG" id="sce:YHL001W"/>
<dbReference type="AGR" id="SGD:S000000993"/>
<dbReference type="SGD" id="S000000993">
    <property type="gene designation" value="RPL14B"/>
</dbReference>
<dbReference type="VEuPathDB" id="FungiDB:YHL001W"/>
<dbReference type="eggNOG" id="KOG3421">
    <property type="taxonomic scope" value="Eukaryota"/>
</dbReference>
<dbReference type="GeneTree" id="ENSGT00390000007888"/>
<dbReference type="HOGENOM" id="CLU_082438_3_1_1"/>
<dbReference type="InParanoid" id="P38754"/>
<dbReference type="OMA" id="KLCFVVD"/>
<dbReference type="OrthoDB" id="1875589at2759"/>
<dbReference type="BioCyc" id="YEAST:G3O-31025-MONOMER"/>
<dbReference type="Reactome" id="R-SCE-156827">
    <property type="pathway name" value="L13a-mediated translational silencing of Ceruloplasmin expression"/>
</dbReference>
<dbReference type="Reactome" id="R-SCE-1799339">
    <property type="pathway name" value="SRP-dependent cotranslational protein targeting to membrane"/>
</dbReference>
<dbReference type="Reactome" id="R-SCE-72689">
    <property type="pathway name" value="Formation of a pool of free 40S subunits"/>
</dbReference>
<dbReference type="Reactome" id="R-SCE-72706">
    <property type="pathway name" value="GTP hydrolysis and joining of the 60S ribosomal subunit"/>
</dbReference>
<dbReference type="Reactome" id="R-SCE-975956">
    <property type="pathway name" value="Nonsense Mediated Decay (NMD) independent of the Exon Junction Complex (EJC)"/>
</dbReference>
<dbReference type="Reactome" id="R-SCE-975957">
    <property type="pathway name" value="Nonsense Mediated Decay (NMD) enhanced by the Exon Junction Complex (EJC)"/>
</dbReference>
<dbReference type="BioGRID-ORCS" id="856388">
    <property type="hits" value="0 hits in 10 CRISPR screens"/>
</dbReference>
<dbReference type="PRO" id="PR:P38754"/>
<dbReference type="Proteomes" id="UP000002311">
    <property type="component" value="Chromosome VIII"/>
</dbReference>
<dbReference type="RNAct" id="P38754">
    <property type="molecule type" value="protein"/>
</dbReference>
<dbReference type="GO" id="GO:0005829">
    <property type="term" value="C:cytosol"/>
    <property type="evidence" value="ECO:0000304"/>
    <property type="project" value="Reactome"/>
</dbReference>
<dbReference type="GO" id="GO:0022625">
    <property type="term" value="C:cytosolic large ribosomal subunit"/>
    <property type="evidence" value="ECO:0000314"/>
    <property type="project" value="SGD"/>
</dbReference>
<dbReference type="GO" id="GO:0005730">
    <property type="term" value="C:nucleolus"/>
    <property type="evidence" value="ECO:0000314"/>
    <property type="project" value="SGD"/>
</dbReference>
<dbReference type="GO" id="GO:0003723">
    <property type="term" value="F:RNA binding"/>
    <property type="evidence" value="ECO:0000314"/>
    <property type="project" value="SGD"/>
</dbReference>
<dbReference type="GO" id="GO:0003735">
    <property type="term" value="F:structural constituent of ribosome"/>
    <property type="evidence" value="ECO:0000318"/>
    <property type="project" value="GO_Central"/>
</dbReference>
<dbReference type="GO" id="GO:0002181">
    <property type="term" value="P:cytoplasmic translation"/>
    <property type="evidence" value="ECO:0000305"/>
    <property type="project" value="SGD"/>
</dbReference>
<dbReference type="GO" id="GO:0000470">
    <property type="term" value="P:maturation of LSU-rRNA"/>
    <property type="evidence" value="ECO:0000315"/>
    <property type="project" value="SGD"/>
</dbReference>
<dbReference type="GO" id="GO:0000027">
    <property type="term" value="P:ribosomal large subunit assembly"/>
    <property type="evidence" value="ECO:0000315"/>
    <property type="project" value="SGD"/>
</dbReference>
<dbReference type="GO" id="GO:0042273">
    <property type="term" value="P:ribosomal large subunit biogenesis"/>
    <property type="evidence" value="ECO:0000318"/>
    <property type="project" value="GO_Central"/>
</dbReference>
<dbReference type="CDD" id="cd23702">
    <property type="entry name" value="eL14"/>
    <property type="match status" value="1"/>
</dbReference>
<dbReference type="FunFam" id="2.30.30.30:FF:000030">
    <property type="entry name" value="60S ribosomal protein L14"/>
    <property type="match status" value="1"/>
</dbReference>
<dbReference type="Gene3D" id="2.30.30.30">
    <property type="match status" value="1"/>
</dbReference>
<dbReference type="Gene3D" id="6.10.250.2270">
    <property type="match status" value="1"/>
</dbReference>
<dbReference type="InterPro" id="IPR005824">
    <property type="entry name" value="KOW"/>
</dbReference>
<dbReference type="InterPro" id="IPR014722">
    <property type="entry name" value="Rib_uL2_dom2"/>
</dbReference>
<dbReference type="InterPro" id="IPR039660">
    <property type="entry name" value="Ribosomal_eL14"/>
</dbReference>
<dbReference type="InterPro" id="IPR002784">
    <property type="entry name" value="Ribosomal_eL14_dom"/>
</dbReference>
<dbReference type="InterPro" id="IPR008991">
    <property type="entry name" value="Translation_prot_SH3-like_sf"/>
</dbReference>
<dbReference type="PANTHER" id="PTHR11127">
    <property type="entry name" value="60S RIBOSOMAL PROTEIN L14"/>
    <property type="match status" value="1"/>
</dbReference>
<dbReference type="PANTHER" id="PTHR11127:SF2">
    <property type="entry name" value="LARGE RIBOSOMAL SUBUNIT PROTEIN EL14"/>
    <property type="match status" value="1"/>
</dbReference>
<dbReference type="Pfam" id="PF00467">
    <property type="entry name" value="KOW"/>
    <property type="match status" value="1"/>
</dbReference>
<dbReference type="Pfam" id="PF01929">
    <property type="entry name" value="Ribosomal_L14e"/>
    <property type="match status" value="1"/>
</dbReference>
<dbReference type="SUPFAM" id="SSF50104">
    <property type="entry name" value="Translation proteins SH3-like domain"/>
    <property type="match status" value="1"/>
</dbReference>
<feature type="initiator methionine" description="Removed" evidence="1">
    <location>
        <position position="1"/>
    </location>
</feature>
<feature type="chain" id="PRO_0000132044" description="Large ribosomal subunit protein eL14B">
    <location>
        <begin position="2"/>
        <end position="138"/>
    </location>
</feature>
<feature type="modified residue" description="N-acetylserine" evidence="1">
    <location>
        <position position="2"/>
    </location>
</feature>
<comment type="function">
    <text evidence="8">Component of the ribosome, a large ribonucleoprotein complex responsible for the synthesis of proteins in the cell. The small ribosomal subunit (SSU) binds messenger RNAs (mRNAs) and translates the encoded message by selecting cognate aminoacyl-transfer RNA (tRNA) molecules. The large subunit (LSU) contains the ribosomal catalytic site termed the peptidyl transferase center (PTC), which catalyzes the formation of peptide bonds, thereby polymerizing the amino acids delivered by tRNAs into a polypeptide chain. The nascent polypeptides leave the ribosome through a tunnel in the LSU and interact with protein factors that function in enzymatic processing, targeting, and the membrane insertion of nascent chains at the exit of the ribosomal tunnel.</text>
</comment>
<comment type="subunit">
    <text evidence="4 9">Component of the large ribosomal subunit (LSU). Mature yeast ribosomes consist of a small (40S) and a large (60S) subunit. The 40S small subunit contains 1 molecule of ribosomal RNA (18S rRNA) and 33 different proteins (encoded by 57 genes). The large 60S subunit contains 3 rRNA molecules (25S, 5.8S and 5S rRNA) and 46 different proteins (encoded by 81 genes) (PubMed:22096102, PubMed:9559554).</text>
</comment>
<comment type="subcellular location">
    <subcellularLocation>
        <location evidence="2 4">Cytoplasm</location>
    </subcellularLocation>
</comment>
<comment type="PTM">
    <text evidence="1">N-terminally acetylated by acetyltransferase NatA.</text>
</comment>
<comment type="miscellaneous">
    <text evidence="3">Present with 35100 molecules/cell in log phase SD medium.</text>
</comment>
<comment type="miscellaneous">
    <text evidence="7">There are 2 genes for eL14 in yeast.</text>
</comment>
<comment type="similarity">
    <text evidence="7">Belongs to the eukaryotic ribosomal protein eL14 family.</text>
</comment>
<proteinExistence type="evidence at protein level"/>
<accession>P38754</accession>
<accession>D3DKR3</accession>
<sequence>MSTDSIVKASNWRLVEVGRVVLIKKGQSAGKLAAIVEIIDQKKVLIDGPKAGVPRQAINLGQVVLTPLTFALPRGARTATVSKKWAAAGVCEKWAASSWAKKIAQRERRAALTDFERFQVMVLRKQKRYTVKKALAKA</sequence>